<accession>Q6PYT3</accession>
<evidence type="ECO:0000250" key="1"/>
<evidence type="ECO:0000255" key="2"/>
<evidence type="ECO:0000256" key="3">
    <source>
        <dbReference type="SAM" id="MobiDB-lite"/>
    </source>
</evidence>
<evidence type="ECO:0000305" key="4"/>
<gene>
    <name type="primary">GJC1</name>
    <name type="synonym">GJA7</name>
</gene>
<protein>
    <recommendedName>
        <fullName>Gap junction gamma-1 protein</fullName>
    </recommendedName>
    <alternativeName>
        <fullName>Connexin-45</fullName>
        <shortName>Cx45</shortName>
    </alternativeName>
    <alternativeName>
        <fullName>Gap junction alpha-7 protein</fullName>
    </alternativeName>
</protein>
<name>CXG1_MESAU</name>
<sequence length="396" mass="45666">MSWSFLTRLLEEIHNHSTFVGKIWLTVLIVFRIVLTAVGGESIYYDEQSKFVCNTEQPGCENVCYDAFAPLSHVRFWVFQIILVATPSVMYLGYAIHKIAKMEHGEADKKAARSKPYAMRWKQHRALEETEEDHEEDPMMYPEMELESEKENKEQSQPKPKHDGRRRIREDGLMKIYVLQLLARTVFEVGFLIGQYFLYGFQVHPFYVCSRLPCPHKIDCFISRPTEKTIFLLIMYGVTGLCLLLNIWEMLHLGFGTIRDSLNSKRRELDDPGAYNYPFTWNTPSAPPGYNIAVKPDQIQYTELSNAKIAYKQNKANIAQEQQYGSHEEHLPADLETLQREIRMAQERLDLAIQAYHHQNNPHGPREKKAKVGSKSGSNKSSISSKSGDGKTSVWI</sequence>
<organism>
    <name type="scientific">Mesocricetus auratus</name>
    <name type="common">Golden hamster</name>
    <dbReference type="NCBI Taxonomy" id="10036"/>
    <lineage>
        <taxon>Eukaryota</taxon>
        <taxon>Metazoa</taxon>
        <taxon>Chordata</taxon>
        <taxon>Craniata</taxon>
        <taxon>Vertebrata</taxon>
        <taxon>Euteleostomi</taxon>
        <taxon>Mammalia</taxon>
        <taxon>Eutheria</taxon>
        <taxon>Euarchontoglires</taxon>
        <taxon>Glires</taxon>
        <taxon>Rodentia</taxon>
        <taxon>Myomorpha</taxon>
        <taxon>Muroidea</taxon>
        <taxon>Cricetidae</taxon>
        <taxon>Cricetinae</taxon>
        <taxon>Mesocricetus</taxon>
    </lineage>
</organism>
<reference key="1">
    <citation type="journal article" date="2004" name="Cell Commun. Adhes.">
        <title>The detection of hamster connexins: a comparison of expression profiles with wild-type mouse and the cancer-prone min mouse.</title>
        <authorList>
            <person name="Cruciani V."/>
            <person name="Heintz K.-M."/>
            <person name="Husoey T."/>
            <person name="Hovig E."/>
            <person name="Warren D.J."/>
            <person name="Mikalsen S.-O."/>
        </authorList>
    </citation>
    <scope>NUCLEOTIDE SEQUENCE [MRNA]</scope>
</reference>
<proteinExistence type="evidence at transcript level"/>
<dbReference type="EMBL" id="AY570790">
    <property type="protein sequence ID" value="AAS83436.1"/>
    <property type="molecule type" value="mRNA"/>
</dbReference>
<dbReference type="RefSeq" id="NP_001268477.1">
    <property type="nucleotide sequence ID" value="NM_001281548.1"/>
</dbReference>
<dbReference type="BMRB" id="Q6PYT3"/>
<dbReference type="SMR" id="Q6PYT3"/>
<dbReference type="STRING" id="10036.ENSMAUP00000025072"/>
<dbReference type="Ensembl" id="ENSMAUT00000029093">
    <property type="protein sequence ID" value="ENSMAUP00000025072"/>
    <property type="gene ID" value="ENSMAUG00000021729"/>
</dbReference>
<dbReference type="GeneID" id="101844542"/>
<dbReference type="KEGG" id="maua:101844542"/>
<dbReference type="CTD" id="10052"/>
<dbReference type="eggNOG" id="ENOG502QV2G">
    <property type="taxonomic scope" value="Eukaryota"/>
</dbReference>
<dbReference type="OrthoDB" id="8875898at2759"/>
<dbReference type="Proteomes" id="UP000189706">
    <property type="component" value="Unplaced"/>
</dbReference>
<dbReference type="GO" id="GO:0005922">
    <property type="term" value="C:connexin complex"/>
    <property type="evidence" value="ECO:0007669"/>
    <property type="project" value="Ensembl"/>
</dbReference>
<dbReference type="GO" id="GO:0005783">
    <property type="term" value="C:endoplasmic reticulum"/>
    <property type="evidence" value="ECO:0007669"/>
    <property type="project" value="Ensembl"/>
</dbReference>
<dbReference type="GO" id="GO:0005654">
    <property type="term" value="C:nucleoplasm"/>
    <property type="evidence" value="ECO:0007669"/>
    <property type="project" value="Ensembl"/>
</dbReference>
<dbReference type="GO" id="GO:0045202">
    <property type="term" value="C:synapse"/>
    <property type="evidence" value="ECO:0007669"/>
    <property type="project" value="GOC"/>
</dbReference>
<dbReference type="GO" id="GO:0086077">
    <property type="term" value="F:gap junction channel activity involved in AV node cell-bundle of His cell electrical coupling"/>
    <property type="evidence" value="ECO:0007669"/>
    <property type="project" value="Ensembl"/>
</dbReference>
<dbReference type="GO" id="GO:0005216">
    <property type="term" value="F:monoatomic ion channel activity"/>
    <property type="evidence" value="ECO:0007669"/>
    <property type="project" value="Ensembl"/>
</dbReference>
<dbReference type="GO" id="GO:0048738">
    <property type="term" value="P:cardiac muscle tissue development"/>
    <property type="evidence" value="ECO:0007669"/>
    <property type="project" value="Ensembl"/>
</dbReference>
<dbReference type="GO" id="GO:0048468">
    <property type="term" value="P:cell development"/>
    <property type="evidence" value="ECO:0007669"/>
    <property type="project" value="Ensembl"/>
</dbReference>
<dbReference type="GO" id="GO:0007268">
    <property type="term" value="P:chemical synaptic transmission"/>
    <property type="evidence" value="ECO:0007669"/>
    <property type="project" value="Ensembl"/>
</dbReference>
<dbReference type="GO" id="GO:0016264">
    <property type="term" value="P:gap junction assembly"/>
    <property type="evidence" value="ECO:0007669"/>
    <property type="project" value="Ensembl"/>
</dbReference>
<dbReference type="GO" id="GO:0001570">
    <property type="term" value="P:vasculogenesis"/>
    <property type="evidence" value="ECO:0007669"/>
    <property type="project" value="Ensembl"/>
</dbReference>
<dbReference type="GO" id="GO:0007601">
    <property type="term" value="P:visual perception"/>
    <property type="evidence" value="ECO:0007669"/>
    <property type="project" value="Ensembl"/>
</dbReference>
<dbReference type="FunFam" id="1.20.1440.80:FF:000003">
    <property type="entry name" value="Gap junction protein"/>
    <property type="match status" value="1"/>
</dbReference>
<dbReference type="Gene3D" id="1.20.1440.80">
    <property type="entry name" value="Gap junction channel protein cysteine-rich domain"/>
    <property type="match status" value="1"/>
</dbReference>
<dbReference type="InterPro" id="IPR000500">
    <property type="entry name" value="Connexin"/>
</dbReference>
<dbReference type="InterPro" id="IPR002265">
    <property type="entry name" value="Connexin45"/>
</dbReference>
<dbReference type="InterPro" id="IPR019570">
    <property type="entry name" value="Connexin_CCC"/>
</dbReference>
<dbReference type="InterPro" id="IPR017990">
    <property type="entry name" value="Connexin_CS"/>
</dbReference>
<dbReference type="InterPro" id="IPR013092">
    <property type="entry name" value="Connexin_N"/>
</dbReference>
<dbReference type="InterPro" id="IPR038359">
    <property type="entry name" value="Connexin_N_sf"/>
</dbReference>
<dbReference type="PANTHER" id="PTHR11984">
    <property type="entry name" value="CONNEXIN"/>
    <property type="match status" value="1"/>
</dbReference>
<dbReference type="PANTHER" id="PTHR11984:SF6">
    <property type="entry name" value="GAP JUNCTION GAMMA-1 PROTEIN"/>
    <property type="match status" value="1"/>
</dbReference>
<dbReference type="Pfam" id="PF00029">
    <property type="entry name" value="Connexin"/>
    <property type="match status" value="1"/>
</dbReference>
<dbReference type="PRINTS" id="PR00206">
    <property type="entry name" value="CONNEXIN"/>
</dbReference>
<dbReference type="PRINTS" id="PR01136">
    <property type="entry name" value="CONNEXINA6"/>
</dbReference>
<dbReference type="SMART" id="SM00037">
    <property type="entry name" value="CNX"/>
    <property type="match status" value="1"/>
</dbReference>
<dbReference type="SMART" id="SM01089">
    <property type="entry name" value="Connexin_CCC"/>
    <property type="match status" value="1"/>
</dbReference>
<dbReference type="PROSITE" id="PS00407">
    <property type="entry name" value="CONNEXINS_1"/>
    <property type="match status" value="1"/>
</dbReference>
<dbReference type="PROSITE" id="PS00408">
    <property type="entry name" value="CONNEXINS_2"/>
    <property type="match status" value="1"/>
</dbReference>
<feature type="chain" id="PRO_0000369542" description="Gap junction gamma-1 protein">
    <location>
        <begin position="1"/>
        <end position="396"/>
    </location>
</feature>
<feature type="topological domain" description="Cytoplasmic" evidence="2">
    <location>
        <begin position="1"/>
        <end position="18"/>
    </location>
</feature>
<feature type="transmembrane region" description="Helical" evidence="2">
    <location>
        <begin position="19"/>
        <end position="39"/>
    </location>
</feature>
<feature type="topological domain" description="Extracellular" evidence="2">
    <location>
        <begin position="40"/>
        <end position="75"/>
    </location>
</feature>
<feature type="transmembrane region" description="Helical" evidence="2">
    <location>
        <begin position="76"/>
        <end position="96"/>
    </location>
</feature>
<feature type="topological domain" description="Cytoplasmic" evidence="2">
    <location>
        <begin position="97"/>
        <end position="175"/>
    </location>
</feature>
<feature type="transmembrane region" description="Helical" evidence="2">
    <location>
        <begin position="176"/>
        <end position="198"/>
    </location>
</feature>
<feature type="topological domain" description="Extracellular" evidence="2">
    <location>
        <begin position="199"/>
        <end position="229"/>
    </location>
</feature>
<feature type="transmembrane region" description="Helical" evidence="2">
    <location>
        <begin position="230"/>
        <end position="250"/>
    </location>
</feature>
<feature type="topological domain" description="Cytoplasmic" evidence="2">
    <location>
        <begin position="251"/>
        <end position="396"/>
    </location>
</feature>
<feature type="region of interest" description="Disordered" evidence="3">
    <location>
        <begin position="145"/>
        <end position="165"/>
    </location>
</feature>
<feature type="region of interest" description="Disordered" evidence="3">
    <location>
        <begin position="357"/>
        <end position="396"/>
    </location>
</feature>
<feature type="coiled-coil region" evidence="2">
    <location>
        <begin position="303"/>
        <end position="358"/>
    </location>
</feature>
<feature type="compositionally biased region" description="Basic and acidic residues" evidence="3">
    <location>
        <begin position="147"/>
        <end position="156"/>
    </location>
</feature>
<feature type="compositionally biased region" description="Low complexity" evidence="3">
    <location>
        <begin position="373"/>
        <end position="396"/>
    </location>
</feature>
<keyword id="KW-0965">Cell junction</keyword>
<keyword id="KW-1003">Cell membrane</keyword>
<keyword id="KW-0175">Coiled coil</keyword>
<keyword id="KW-0303">Gap junction</keyword>
<keyword id="KW-0472">Membrane</keyword>
<keyword id="KW-1185">Reference proteome</keyword>
<keyword id="KW-0812">Transmembrane</keyword>
<keyword id="KW-1133">Transmembrane helix</keyword>
<comment type="function">
    <text evidence="1">One gap junction consists of a cluster of closely packed pairs of transmembrane channels, the connexons, through which materials of low MW diffuse from one cell to a neighboring cell.</text>
</comment>
<comment type="subunit">
    <text evidence="1">A connexon is composed of a hexamer of connexins. Interacts with CNST (By similarity).</text>
</comment>
<comment type="subcellular location">
    <subcellularLocation>
        <location evidence="1">Cell membrane</location>
        <topology evidence="1">Multi-pass membrane protein</topology>
    </subcellularLocation>
    <subcellularLocation>
        <location evidence="1">Cell junction</location>
        <location evidence="1">Gap junction</location>
    </subcellularLocation>
</comment>
<comment type="similarity">
    <text evidence="4">Belongs to the connexin family. Gamma-type subfamily.</text>
</comment>